<name>RUVA_NEIMA</name>
<gene>
    <name evidence="1" type="primary">ruvA</name>
    <name type="ordered locus">NMA2221</name>
</gene>
<organism>
    <name type="scientific">Neisseria meningitidis serogroup A / serotype 4A (strain DSM 15465 / Z2491)</name>
    <dbReference type="NCBI Taxonomy" id="122587"/>
    <lineage>
        <taxon>Bacteria</taxon>
        <taxon>Pseudomonadati</taxon>
        <taxon>Pseudomonadota</taxon>
        <taxon>Betaproteobacteria</taxon>
        <taxon>Neisseriales</taxon>
        <taxon>Neisseriaceae</taxon>
        <taxon>Neisseria</taxon>
    </lineage>
</organism>
<protein>
    <recommendedName>
        <fullName evidence="1">Holliday junction branch migration complex subunit RuvA</fullName>
    </recommendedName>
</protein>
<feature type="chain" id="PRO_0000094655" description="Holliday junction branch migration complex subunit RuvA">
    <location>
        <begin position="1"/>
        <end position="194"/>
    </location>
</feature>
<feature type="region of interest" description="Domain I" evidence="1">
    <location>
        <begin position="1"/>
        <end position="64"/>
    </location>
</feature>
<feature type="region of interest" description="Domain II" evidence="1">
    <location>
        <begin position="65"/>
        <end position="143"/>
    </location>
</feature>
<feature type="region of interest" description="Flexible linker" evidence="1">
    <location>
        <begin position="144"/>
        <end position="147"/>
    </location>
</feature>
<feature type="region of interest" description="Domain III" evidence="1">
    <location>
        <begin position="147"/>
        <end position="194"/>
    </location>
</feature>
<reference key="1">
    <citation type="journal article" date="2000" name="Nature">
        <title>Complete DNA sequence of a serogroup A strain of Neisseria meningitidis Z2491.</title>
        <authorList>
            <person name="Parkhill J."/>
            <person name="Achtman M."/>
            <person name="James K.D."/>
            <person name="Bentley S.D."/>
            <person name="Churcher C.M."/>
            <person name="Klee S.R."/>
            <person name="Morelli G."/>
            <person name="Basham D."/>
            <person name="Brown D."/>
            <person name="Chillingworth T."/>
            <person name="Davies R.M."/>
            <person name="Davis P."/>
            <person name="Devlin K."/>
            <person name="Feltwell T."/>
            <person name="Hamlin N."/>
            <person name="Holroyd S."/>
            <person name="Jagels K."/>
            <person name="Leather S."/>
            <person name="Moule S."/>
            <person name="Mungall K.L."/>
            <person name="Quail M.A."/>
            <person name="Rajandream M.A."/>
            <person name="Rutherford K.M."/>
            <person name="Simmonds M."/>
            <person name="Skelton J."/>
            <person name="Whitehead S."/>
            <person name="Spratt B.G."/>
            <person name="Barrell B.G."/>
        </authorList>
    </citation>
    <scope>NUCLEOTIDE SEQUENCE [LARGE SCALE GENOMIC DNA]</scope>
    <source>
        <strain>DSM 15465 / Z2491</strain>
    </source>
</reference>
<comment type="function">
    <text evidence="1">The RuvA-RuvB-RuvC complex processes Holliday junction (HJ) DNA during genetic recombination and DNA repair, while the RuvA-RuvB complex plays an important role in the rescue of blocked DNA replication forks via replication fork reversal (RFR). RuvA specifically binds to HJ cruciform DNA, conferring on it an open structure. The RuvB hexamer acts as an ATP-dependent pump, pulling dsDNA into and through the RuvAB complex. HJ branch migration allows RuvC to scan DNA until it finds its consensus sequence, where it cleaves and resolves the cruciform DNA.</text>
</comment>
<comment type="subunit">
    <text evidence="1">Homotetramer. Forms an RuvA(8)-RuvB(12)-Holliday junction (HJ) complex. HJ DNA is sandwiched between 2 RuvA tetramers; dsDNA enters through RuvA and exits via RuvB. An RuvB hexamer assembles on each DNA strand where it exits the tetramer. Each RuvB hexamer is contacted by two RuvA subunits (via domain III) on 2 adjacent RuvB subunits; this complex drives branch migration. In the full resolvosome a probable DNA-RuvA(4)-RuvB(12)-RuvC(2) complex forms which resolves the HJ.</text>
</comment>
<comment type="subcellular location">
    <subcellularLocation>
        <location evidence="1">Cytoplasm</location>
    </subcellularLocation>
</comment>
<comment type="domain">
    <text evidence="1">Has three domains with a flexible linker between the domains II and III and assumes an 'L' shape. Domain III is highly mobile and contacts RuvB.</text>
</comment>
<comment type="similarity">
    <text evidence="1">Belongs to the RuvA family.</text>
</comment>
<accession>Q9JSM5</accession>
<accession>A1IU44</accession>
<proteinExistence type="inferred from homology"/>
<dbReference type="EMBL" id="AL157959">
    <property type="protein sequence ID" value="CAM09314.1"/>
    <property type="molecule type" value="Genomic_DNA"/>
</dbReference>
<dbReference type="PIR" id="H81795">
    <property type="entry name" value="H81795"/>
</dbReference>
<dbReference type="RefSeq" id="WP_002240238.1">
    <property type="nucleotide sequence ID" value="NC_003116.1"/>
</dbReference>
<dbReference type="SMR" id="Q9JSM5"/>
<dbReference type="EnsemblBacteria" id="CAM09314">
    <property type="protein sequence ID" value="CAM09314"/>
    <property type="gene ID" value="NMA2221"/>
</dbReference>
<dbReference type="KEGG" id="nma:NMA2221"/>
<dbReference type="HOGENOM" id="CLU_087936_0_0_4"/>
<dbReference type="Proteomes" id="UP000000626">
    <property type="component" value="Chromosome"/>
</dbReference>
<dbReference type="GO" id="GO:0005737">
    <property type="term" value="C:cytoplasm"/>
    <property type="evidence" value="ECO:0007669"/>
    <property type="project" value="UniProtKB-SubCell"/>
</dbReference>
<dbReference type="GO" id="GO:0009379">
    <property type="term" value="C:Holliday junction helicase complex"/>
    <property type="evidence" value="ECO:0007669"/>
    <property type="project" value="InterPro"/>
</dbReference>
<dbReference type="GO" id="GO:0048476">
    <property type="term" value="C:Holliday junction resolvase complex"/>
    <property type="evidence" value="ECO:0007669"/>
    <property type="project" value="UniProtKB-UniRule"/>
</dbReference>
<dbReference type="GO" id="GO:0005524">
    <property type="term" value="F:ATP binding"/>
    <property type="evidence" value="ECO:0007669"/>
    <property type="project" value="InterPro"/>
</dbReference>
<dbReference type="GO" id="GO:0000400">
    <property type="term" value="F:four-way junction DNA binding"/>
    <property type="evidence" value="ECO:0007669"/>
    <property type="project" value="UniProtKB-UniRule"/>
</dbReference>
<dbReference type="GO" id="GO:0009378">
    <property type="term" value="F:four-way junction helicase activity"/>
    <property type="evidence" value="ECO:0007669"/>
    <property type="project" value="InterPro"/>
</dbReference>
<dbReference type="GO" id="GO:0006310">
    <property type="term" value="P:DNA recombination"/>
    <property type="evidence" value="ECO:0007669"/>
    <property type="project" value="UniProtKB-UniRule"/>
</dbReference>
<dbReference type="GO" id="GO:0006281">
    <property type="term" value="P:DNA repair"/>
    <property type="evidence" value="ECO:0007669"/>
    <property type="project" value="UniProtKB-UniRule"/>
</dbReference>
<dbReference type="CDD" id="cd14332">
    <property type="entry name" value="UBA_RuvA_C"/>
    <property type="match status" value="1"/>
</dbReference>
<dbReference type="Gene3D" id="1.10.150.20">
    <property type="entry name" value="5' to 3' exonuclease, C-terminal subdomain"/>
    <property type="match status" value="1"/>
</dbReference>
<dbReference type="Gene3D" id="1.10.8.10">
    <property type="entry name" value="DNA helicase RuvA subunit, C-terminal domain"/>
    <property type="match status" value="1"/>
</dbReference>
<dbReference type="Gene3D" id="2.40.50.140">
    <property type="entry name" value="Nucleic acid-binding proteins"/>
    <property type="match status" value="1"/>
</dbReference>
<dbReference type="HAMAP" id="MF_00031">
    <property type="entry name" value="DNA_HJ_migration_RuvA"/>
    <property type="match status" value="1"/>
</dbReference>
<dbReference type="InterPro" id="IPR013849">
    <property type="entry name" value="DNA_helicase_Holl-junc_RuvA_I"/>
</dbReference>
<dbReference type="InterPro" id="IPR003583">
    <property type="entry name" value="Hlx-hairpin-Hlx_DNA-bd_motif"/>
</dbReference>
<dbReference type="InterPro" id="IPR012340">
    <property type="entry name" value="NA-bd_OB-fold"/>
</dbReference>
<dbReference type="InterPro" id="IPR000085">
    <property type="entry name" value="RuvA"/>
</dbReference>
<dbReference type="InterPro" id="IPR010994">
    <property type="entry name" value="RuvA_2-like"/>
</dbReference>
<dbReference type="InterPro" id="IPR011114">
    <property type="entry name" value="RuvA_C"/>
</dbReference>
<dbReference type="InterPro" id="IPR036267">
    <property type="entry name" value="RuvA_C_sf"/>
</dbReference>
<dbReference type="NCBIfam" id="TIGR00084">
    <property type="entry name" value="ruvA"/>
    <property type="match status" value="1"/>
</dbReference>
<dbReference type="Pfam" id="PF14520">
    <property type="entry name" value="HHH_5"/>
    <property type="match status" value="1"/>
</dbReference>
<dbReference type="Pfam" id="PF07499">
    <property type="entry name" value="RuvA_C"/>
    <property type="match status" value="1"/>
</dbReference>
<dbReference type="Pfam" id="PF01330">
    <property type="entry name" value="RuvA_N"/>
    <property type="match status" value="1"/>
</dbReference>
<dbReference type="SMART" id="SM00278">
    <property type="entry name" value="HhH1"/>
    <property type="match status" value="2"/>
</dbReference>
<dbReference type="SUPFAM" id="SSF46929">
    <property type="entry name" value="DNA helicase RuvA subunit, C-terminal domain"/>
    <property type="match status" value="1"/>
</dbReference>
<dbReference type="SUPFAM" id="SSF50249">
    <property type="entry name" value="Nucleic acid-binding proteins"/>
    <property type="match status" value="1"/>
</dbReference>
<dbReference type="SUPFAM" id="SSF47781">
    <property type="entry name" value="RuvA domain 2-like"/>
    <property type="match status" value="1"/>
</dbReference>
<keyword id="KW-0963">Cytoplasm</keyword>
<keyword id="KW-0227">DNA damage</keyword>
<keyword id="KW-0233">DNA recombination</keyword>
<keyword id="KW-0234">DNA repair</keyword>
<keyword id="KW-0238">DNA-binding</keyword>
<sequence length="194" mass="20600">MISRLTGKLVEKNPPQIVIDVNGVGYEADVSMQTFYNLPPVGESVQLFTQLIIREDAHLLFGFATAEERKTFRQLIKVGGIGAKTALGILSAMTADELAQAVAEEDVKRLSSAPGIGKKTAERMVLELRGKLVAHAVTDGLFAAAPAADETEDIVGTLLALGYSEREAKAAVKGVPEGTDVGEGVRLALKNLLK</sequence>
<evidence type="ECO:0000255" key="1">
    <source>
        <dbReference type="HAMAP-Rule" id="MF_00031"/>
    </source>
</evidence>